<organism>
    <name type="scientific">Staphylococcus aureus (strain MRSA252)</name>
    <dbReference type="NCBI Taxonomy" id="282458"/>
    <lineage>
        <taxon>Bacteria</taxon>
        <taxon>Bacillati</taxon>
        <taxon>Bacillota</taxon>
        <taxon>Bacilli</taxon>
        <taxon>Bacillales</taxon>
        <taxon>Staphylococcaceae</taxon>
        <taxon>Staphylococcus</taxon>
    </lineage>
</organism>
<sequence length="357" mass="38639">MKGKFLKVSSLFVATLTTATLVSSPAANALSSKAMDNHPQQTQTDKQQTPKIQKGGNLKPLEQRERANVILPNNDRHQITDTTNGHYAPVTYIQVEAPTGTFIASGVVVGKDTLLTNKHIVDATHGDPHALKAFASAINQDNYPNGGFTAEQITKYSGEGDLAIVKFSPNEQNKHIGEVVKPATMSNNAETQVNQNITVTGYPGDKPVATMWESKGKITYLKGEAMQYDLSTTGGNSGSPVFNEKNEVIGIHWGGVPNQFNGAVFINENVRNFLKQNIEDINFANDDHPNNPDNPDNPNNPDNPNNPDNPNNPDNPDNPNNPDNPNNPDNPNNPDQPNNPNNPDNGDNNNSDNPDAA</sequence>
<name>SSPA_STAAR</name>
<proteinExistence type="inferred from homology"/>
<comment type="function">
    <text evidence="1">Preferentially cleaves peptide bonds on the carboxyl-terminal side of aspartate and glutamate. Along with other extracellular proteases it is involved in colonization and infection of human tissues. Required for proteolytic maturation of thiol protease SspB and inactivation of SspC, an inhibitor of SspB. It is the most important protease for degradation of fibronectin-binding protein (FnBP) and surface protein A, which are involved in adherence to host cells. May also protect bacteria against host defense mechanism by cleaving the immunoglobulin classes IgG, IgA and IgM. May be involved in the stability of secreted lipases (By similarity).</text>
</comment>
<comment type="catalytic activity">
    <reaction evidence="3">
        <text>Preferential cleavage: Glu-|-Xaa, Asp-|-Xaa.</text>
        <dbReference type="EC" id="3.4.21.19"/>
    </reaction>
</comment>
<comment type="subcellular location">
    <subcellularLocation>
        <location evidence="1">Secreted</location>
    </subcellularLocation>
</comment>
<comment type="PTM">
    <text evidence="1">Proteolytically cleaved by aureolysin (aur). This cleavage leads to the activation of SspA (By similarity).</text>
</comment>
<comment type="miscellaneous">
    <text evidence="1">The cascade of activation of extracellular proteases proceeds from the metalloprotease aureolysin (aur), through SspA to SspB.</text>
</comment>
<comment type="similarity">
    <text evidence="5">Belongs to the peptidase S1B family.</text>
</comment>
<feature type="signal peptide" evidence="2">
    <location>
        <begin position="1"/>
        <end position="29"/>
    </location>
</feature>
<feature type="propeptide" id="PRO_0000026890" evidence="1">
    <location>
        <begin position="30"/>
        <end position="68"/>
    </location>
</feature>
<feature type="chain" id="PRO_0000026891" description="Glutamyl endopeptidase">
    <location>
        <begin position="69"/>
        <end position="357"/>
    </location>
</feature>
<feature type="repeat" description="1">
    <location>
        <begin position="289"/>
        <end position="291"/>
    </location>
</feature>
<feature type="repeat" description="2">
    <location>
        <begin position="292"/>
        <end position="294"/>
    </location>
</feature>
<feature type="repeat" description="3">
    <location>
        <begin position="295"/>
        <end position="297"/>
    </location>
</feature>
<feature type="repeat" description="4">
    <location>
        <begin position="298"/>
        <end position="300"/>
    </location>
</feature>
<feature type="repeat" description="5">
    <location>
        <begin position="301"/>
        <end position="303"/>
    </location>
</feature>
<feature type="repeat" description="6">
    <location>
        <begin position="304"/>
        <end position="306"/>
    </location>
</feature>
<feature type="repeat" description="7">
    <location>
        <begin position="307"/>
        <end position="309"/>
    </location>
</feature>
<feature type="repeat" description="8">
    <location>
        <begin position="310"/>
        <end position="312"/>
    </location>
</feature>
<feature type="repeat" description="9">
    <location>
        <begin position="313"/>
        <end position="315"/>
    </location>
</feature>
<feature type="repeat" description="10">
    <location>
        <begin position="316"/>
        <end position="318"/>
    </location>
</feature>
<feature type="repeat" description="11">
    <location>
        <begin position="319"/>
        <end position="321"/>
    </location>
</feature>
<feature type="repeat" description="12">
    <location>
        <begin position="322"/>
        <end position="324"/>
    </location>
</feature>
<feature type="repeat" description="13">
    <location>
        <begin position="325"/>
        <end position="327"/>
    </location>
</feature>
<feature type="repeat" description="14">
    <location>
        <begin position="328"/>
        <end position="330"/>
    </location>
</feature>
<feature type="repeat" description="15">
    <location>
        <begin position="331"/>
        <end position="333"/>
    </location>
</feature>
<feature type="repeat" description="16">
    <location>
        <begin position="337"/>
        <end position="339"/>
    </location>
</feature>
<feature type="repeat" description="17">
    <location>
        <begin position="340"/>
        <end position="342"/>
    </location>
</feature>
<feature type="repeat" description="18">
    <location>
        <begin position="343"/>
        <end position="345"/>
    </location>
</feature>
<feature type="region of interest" description="Disordered" evidence="4">
    <location>
        <begin position="33"/>
        <end position="58"/>
    </location>
</feature>
<feature type="region of interest" description="Disordered" evidence="4">
    <location>
        <begin position="282"/>
        <end position="357"/>
    </location>
</feature>
<feature type="region of interest" description="18 X 3 AA repeats of P-[DN]-N">
    <location>
        <begin position="289"/>
        <end position="345"/>
    </location>
</feature>
<feature type="compositionally biased region" description="Low complexity" evidence="4">
    <location>
        <begin position="40"/>
        <end position="54"/>
    </location>
</feature>
<feature type="compositionally biased region" description="Low complexity" evidence="4">
    <location>
        <begin position="291"/>
        <end position="357"/>
    </location>
</feature>
<feature type="active site" description="Charge relay system" evidence="3">
    <location>
        <position position="119"/>
    </location>
</feature>
<feature type="active site" description="Charge relay system" evidence="3">
    <location>
        <position position="161"/>
    </location>
</feature>
<feature type="active site" description="Charge relay system" evidence="3">
    <location>
        <position position="237"/>
    </location>
</feature>
<feature type="site" description="Cleavage; by aureolysin" evidence="1">
    <location>
        <begin position="68"/>
        <end position="69"/>
    </location>
</feature>
<reference key="1">
    <citation type="journal article" date="2004" name="Proc. Natl. Acad. Sci. U.S.A.">
        <title>Complete genomes of two clinical Staphylococcus aureus strains: evidence for the rapid evolution of virulence and drug resistance.</title>
        <authorList>
            <person name="Holden M.T.G."/>
            <person name="Feil E.J."/>
            <person name="Lindsay J.A."/>
            <person name="Peacock S.J."/>
            <person name="Day N.P.J."/>
            <person name="Enright M.C."/>
            <person name="Foster T.J."/>
            <person name="Moore C.E."/>
            <person name="Hurst L."/>
            <person name="Atkin R."/>
            <person name="Barron A."/>
            <person name="Bason N."/>
            <person name="Bentley S.D."/>
            <person name="Chillingworth C."/>
            <person name="Chillingworth T."/>
            <person name="Churcher C."/>
            <person name="Clark L."/>
            <person name="Corton C."/>
            <person name="Cronin A."/>
            <person name="Doggett J."/>
            <person name="Dowd L."/>
            <person name="Feltwell T."/>
            <person name="Hance Z."/>
            <person name="Harris B."/>
            <person name="Hauser H."/>
            <person name="Holroyd S."/>
            <person name="Jagels K."/>
            <person name="James K.D."/>
            <person name="Lennard N."/>
            <person name="Line A."/>
            <person name="Mayes R."/>
            <person name="Moule S."/>
            <person name="Mungall K."/>
            <person name="Ormond D."/>
            <person name="Quail M.A."/>
            <person name="Rabbinowitsch E."/>
            <person name="Rutherford K.M."/>
            <person name="Sanders M."/>
            <person name="Sharp S."/>
            <person name="Simmonds M."/>
            <person name="Stevens K."/>
            <person name="Whitehead S."/>
            <person name="Barrell B.G."/>
            <person name="Spratt B.G."/>
            <person name="Parkhill J."/>
        </authorList>
    </citation>
    <scope>NUCLEOTIDE SEQUENCE [LARGE SCALE GENOMIC DNA]</scope>
    <source>
        <strain>MRSA252</strain>
    </source>
</reference>
<accession>Q6GI34</accession>
<dbReference type="EC" id="3.4.21.19"/>
<dbReference type="EMBL" id="BX571856">
    <property type="protein sequence ID" value="CAG40026.1"/>
    <property type="molecule type" value="Genomic_DNA"/>
</dbReference>
<dbReference type="RefSeq" id="WP_000676561.1">
    <property type="nucleotide sequence ID" value="NC_002952.2"/>
</dbReference>
<dbReference type="SMR" id="Q6GI34"/>
<dbReference type="MEROPS" id="S01.269"/>
<dbReference type="KEGG" id="sar:SAR1022"/>
<dbReference type="HOGENOM" id="CLU_073589_1_0_9"/>
<dbReference type="PRO" id="PR:Q6GI34"/>
<dbReference type="Proteomes" id="UP000000596">
    <property type="component" value="Chromosome"/>
</dbReference>
<dbReference type="GO" id="GO:0005576">
    <property type="term" value="C:extracellular region"/>
    <property type="evidence" value="ECO:0007669"/>
    <property type="project" value="UniProtKB-SubCell"/>
</dbReference>
<dbReference type="GO" id="GO:0004252">
    <property type="term" value="F:serine-type endopeptidase activity"/>
    <property type="evidence" value="ECO:0007669"/>
    <property type="project" value="InterPro"/>
</dbReference>
<dbReference type="GO" id="GO:0006508">
    <property type="term" value="P:proteolysis"/>
    <property type="evidence" value="ECO:0007669"/>
    <property type="project" value="UniProtKB-KW"/>
</dbReference>
<dbReference type="Gene3D" id="2.40.10.10">
    <property type="entry name" value="Trypsin-like serine proteases"/>
    <property type="match status" value="2"/>
</dbReference>
<dbReference type="InterPro" id="IPR050966">
    <property type="entry name" value="Glutamyl_endopeptidase"/>
</dbReference>
<dbReference type="InterPro" id="IPR009003">
    <property type="entry name" value="Peptidase_S1_PA"/>
</dbReference>
<dbReference type="InterPro" id="IPR043504">
    <property type="entry name" value="Peptidase_S1_PA_chymotrypsin"/>
</dbReference>
<dbReference type="InterPro" id="IPR008256">
    <property type="entry name" value="Peptidase_S1B"/>
</dbReference>
<dbReference type="InterPro" id="IPR008353">
    <property type="entry name" value="Peptidase_S1B_tx"/>
</dbReference>
<dbReference type="InterPro" id="IPR028301">
    <property type="entry name" value="V8_his_AS"/>
</dbReference>
<dbReference type="InterPro" id="IPR000126">
    <property type="entry name" value="V8_ser_AS"/>
</dbReference>
<dbReference type="PANTHER" id="PTHR15462">
    <property type="entry name" value="SERINE PROTEASE"/>
    <property type="match status" value="1"/>
</dbReference>
<dbReference type="PANTHER" id="PTHR15462:SF8">
    <property type="entry name" value="SERINE PROTEASE"/>
    <property type="match status" value="1"/>
</dbReference>
<dbReference type="Pfam" id="PF13365">
    <property type="entry name" value="Trypsin_2"/>
    <property type="match status" value="1"/>
</dbReference>
<dbReference type="PRINTS" id="PR01774">
    <property type="entry name" value="EXFOLTOXIN"/>
</dbReference>
<dbReference type="PRINTS" id="PR00839">
    <property type="entry name" value="V8PROTEASE"/>
</dbReference>
<dbReference type="SUPFAM" id="SSF50494">
    <property type="entry name" value="Trypsin-like serine proteases"/>
    <property type="match status" value="1"/>
</dbReference>
<dbReference type="PROSITE" id="PS00672">
    <property type="entry name" value="V8_HIS"/>
    <property type="match status" value="1"/>
</dbReference>
<dbReference type="PROSITE" id="PS00673">
    <property type="entry name" value="V8_SER"/>
    <property type="match status" value="1"/>
</dbReference>
<protein>
    <recommendedName>
        <fullName>Glutamyl endopeptidase</fullName>
        <ecNumber>3.4.21.19</ecNumber>
    </recommendedName>
    <alternativeName>
        <fullName>Endoproteinase Glu-C</fullName>
    </alternativeName>
    <alternativeName>
        <fullName>Staphylococcal serine proteinase</fullName>
    </alternativeName>
    <alternativeName>
        <fullName>V8 protease</fullName>
    </alternativeName>
    <alternativeName>
        <fullName>V8 proteinase</fullName>
    </alternativeName>
</protein>
<gene>
    <name type="primary">sspA</name>
    <name type="ordered locus">SAR1022</name>
</gene>
<evidence type="ECO:0000250" key="1"/>
<evidence type="ECO:0000255" key="2"/>
<evidence type="ECO:0000255" key="3">
    <source>
        <dbReference type="PROSITE-ProRule" id="PRU10083"/>
    </source>
</evidence>
<evidence type="ECO:0000256" key="4">
    <source>
        <dbReference type="SAM" id="MobiDB-lite"/>
    </source>
</evidence>
<evidence type="ECO:0000305" key="5"/>
<keyword id="KW-0378">Hydrolase</keyword>
<keyword id="KW-0645">Protease</keyword>
<keyword id="KW-0677">Repeat</keyword>
<keyword id="KW-0964">Secreted</keyword>
<keyword id="KW-0720">Serine protease</keyword>
<keyword id="KW-0732">Signal</keyword>
<keyword id="KW-0843">Virulence</keyword>
<keyword id="KW-0865">Zymogen</keyword>